<evidence type="ECO:0000255" key="1">
    <source>
        <dbReference type="PROSITE-ProRule" id="PRU01284"/>
    </source>
</evidence>
<evidence type="ECO:0000256" key="2">
    <source>
        <dbReference type="SAM" id="MobiDB-lite"/>
    </source>
</evidence>
<evidence type="ECO:0000305" key="3"/>
<gene>
    <name type="ordered locus">BQ2027_MB2213C</name>
</gene>
<name>Y2213_MYCBO</name>
<sequence>MRLDQRWLIARVIMRSAIGFFASFTVSSGVLAANVLADPADDALAKLNELSRQAEQTTEALHSAQLDLNEKLAAQRAADQKLADNRTALDAARARLATFQTAVNKVAAATYMGGRTHGMDAILTAESPQLLIDRLSVQRVMAHQMSTQMARFKAAGEQAVKAEQAAAKSAADARSAAEQAAAVRANLQHKQSQLQVQIAVVKSQYVALTPEERTALADPGPVPAVAAIAPGAPPAALPPGAPPGDGPAPGVAPPPGGMPGLPFVQPDGAGGDRTAVVQAALTQVGAPYAWGGAAPGGFDCSGLVMWAFQQAGIALPHSSQALAHGGQPVALSDLQPGDVLTFYSDASHAGIYIGDGLMVHSSTYGVPVRVVPMDSSGPIYDARRY</sequence>
<comment type="similarity">
    <text evidence="1 3">Belongs to the peptidase C40 family.</text>
</comment>
<feature type="chain" id="PRO_0000109874" description="Probable endopeptidase Mb2213c">
    <location>
        <begin position="1"/>
        <end position="385"/>
    </location>
</feature>
<feature type="domain" description="NlpC/P60" evidence="1">
    <location>
        <begin position="270"/>
        <end position="385"/>
    </location>
</feature>
<feature type="region of interest" description="Disordered" evidence="2">
    <location>
        <begin position="235"/>
        <end position="268"/>
    </location>
</feature>
<feature type="compositionally biased region" description="Pro residues" evidence="2">
    <location>
        <begin position="235"/>
        <end position="257"/>
    </location>
</feature>
<feature type="active site" description="Nucleophile" evidence="1">
    <location>
        <position position="300"/>
    </location>
</feature>
<feature type="active site" description="Proton acceptor" evidence="1">
    <location>
        <position position="348"/>
    </location>
</feature>
<feature type="active site" evidence="1">
    <location>
        <position position="360"/>
    </location>
</feature>
<protein>
    <recommendedName>
        <fullName>Probable endopeptidase Mb2213c</fullName>
        <ecNumber>3.4.-.-</ecNumber>
    </recommendedName>
</protein>
<reference key="1">
    <citation type="journal article" date="2003" name="Proc. Natl. Acad. Sci. U.S.A.">
        <title>The complete genome sequence of Mycobacterium bovis.</title>
        <authorList>
            <person name="Garnier T."/>
            <person name="Eiglmeier K."/>
            <person name="Camus J.-C."/>
            <person name="Medina N."/>
            <person name="Mansoor H."/>
            <person name="Pryor M."/>
            <person name="Duthoy S."/>
            <person name="Grondin S."/>
            <person name="Lacroix C."/>
            <person name="Monsempe C."/>
            <person name="Simon S."/>
            <person name="Harris B."/>
            <person name="Atkin R."/>
            <person name="Doggett J."/>
            <person name="Mayes R."/>
            <person name="Keating L."/>
            <person name="Wheeler P.R."/>
            <person name="Parkhill J."/>
            <person name="Barrell B.G."/>
            <person name="Cole S.T."/>
            <person name="Gordon S.V."/>
            <person name="Hewinson R.G."/>
        </authorList>
    </citation>
    <scope>NUCLEOTIDE SEQUENCE [LARGE SCALE GENOMIC DNA]</scope>
    <source>
        <strain>ATCC BAA-935 / AF2122/97</strain>
    </source>
</reference>
<reference key="2">
    <citation type="journal article" date="2017" name="Genome Announc.">
        <title>Updated reference genome sequence and annotation of Mycobacterium bovis AF2122/97.</title>
        <authorList>
            <person name="Malone K.M."/>
            <person name="Farrell D."/>
            <person name="Stuber T.P."/>
            <person name="Schubert O.T."/>
            <person name="Aebersold R."/>
            <person name="Robbe-Austerman S."/>
            <person name="Gordon S.V."/>
        </authorList>
    </citation>
    <scope>NUCLEOTIDE SEQUENCE [LARGE SCALE GENOMIC DNA]</scope>
    <scope>GENOME REANNOTATION</scope>
    <source>
        <strain>ATCC BAA-935 / AF2122/97</strain>
    </source>
</reference>
<keyword id="KW-0378">Hydrolase</keyword>
<keyword id="KW-0645">Protease</keyword>
<keyword id="KW-1185">Reference proteome</keyword>
<keyword id="KW-0788">Thiol protease</keyword>
<organism>
    <name type="scientific">Mycobacterium bovis (strain ATCC BAA-935 / AF2122/97)</name>
    <dbReference type="NCBI Taxonomy" id="233413"/>
    <lineage>
        <taxon>Bacteria</taxon>
        <taxon>Bacillati</taxon>
        <taxon>Actinomycetota</taxon>
        <taxon>Actinomycetes</taxon>
        <taxon>Mycobacteriales</taxon>
        <taxon>Mycobacteriaceae</taxon>
        <taxon>Mycobacterium</taxon>
        <taxon>Mycobacterium tuberculosis complex</taxon>
    </lineage>
</organism>
<accession>P67474</accession>
<accession>A0A1R3Y0F6</accession>
<accession>O53524</accession>
<accession>Q10383</accession>
<accession>X2BJK7</accession>
<proteinExistence type="inferred from homology"/>
<dbReference type="EC" id="3.4.-.-"/>
<dbReference type="EMBL" id="LT708304">
    <property type="protein sequence ID" value="SIU00821.1"/>
    <property type="molecule type" value="Genomic_DNA"/>
</dbReference>
<dbReference type="RefSeq" id="NP_855862.1">
    <property type="nucleotide sequence ID" value="NC_002945.3"/>
</dbReference>
<dbReference type="SMR" id="P67474"/>
<dbReference type="KEGG" id="mbo:BQ2027_MB2213C"/>
<dbReference type="PATRIC" id="fig|233413.5.peg.2428"/>
<dbReference type="Proteomes" id="UP000001419">
    <property type="component" value="Chromosome"/>
</dbReference>
<dbReference type="GO" id="GO:0008234">
    <property type="term" value="F:cysteine-type peptidase activity"/>
    <property type="evidence" value="ECO:0007669"/>
    <property type="project" value="UniProtKB-KW"/>
</dbReference>
<dbReference type="GO" id="GO:0006508">
    <property type="term" value="P:proteolysis"/>
    <property type="evidence" value="ECO:0007669"/>
    <property type="project" value="UniProtKB-KW"/>
</dbReference>
<dbReference type="Gene3D" id="6.10.250.3150">
    <property type="match status" value="1"/>
</dbReference>
<dbReference type="Gene3D" id="3.90.1720.10">
    <property type="entry name" value="endopeptidase domain like (from Nostoc punctiforme)"/>
    <property type="match status" value="1"/>
</dbReference>
<dbReference type="InterPro" id="IPR000064">
    <property type="entry name" value="NLP_P60_dom"/>
</dbReference>
<dbReference type="InterPro" id="IPR038765">
    <property type="entry name" value="Papain-like_cys_pep_sf"/>
</dbReference>
<dbReference type="InterPro" id="IPR051794">
    <property type="entry name" value="PG_Endopeptidase_C40"/>
</dbReference>
<dbReference type="NCBIfam" id="NF038345">
    <property type="entry name" value="wall_hydro_RipC"/>
    <property type="match status" value="1"/>
</dbReference>
<dbReference type="PANTHER" id="PTHR47359:SF3">
    <property type="entry name" value="NLP_P60 DOMAIN-CONTAINING PROTEIN-RELATED"/>
    <property type="match status" value="1"/>
</dbReference>
<dbReference type="PANTHER" id="PTHR47359">
    <property type="entry name" value="PEPTIDOGLYCAN DL-ENDOPEPTIDASE CWLO"/>
    <property type="match status" value="1"/>
</dbReference>
<dbReference type="Pfam" id="PF00877">
    <property type="entry name" value="NLPC_P60"/>
    <property type="match status" value="1"/>
</dbReference>
<dbReference type="SUPFAM" id="SSF54001">
    <property type="entry name" value="Cysteine proteinases"/>
    <property type="match status" value="1"/>
</dbReference>
<dbReference type="PROSITE" id="PS51935">
    <property type="entry name" value="NLPC_P60"/>
    <property type="match status" value="1"/>
</dbReference>